<organism>
    <name type="scientific">Talaromyces marneffei (strain ATCC 18224 / CBS 334.59 / QM 7333)</name>
    <name type="common">Penicillium marneffei</name>
    <dbReference type="NCBI Taxonomy" id="441960"/>
    <lineage>
        <taxon>Eukaryota</taxon>
        <taxon>Fungi</taxon>
        <taxon>Dikarya</taxon>
        <taxon>Ascomycota</taxon>
        <taxon>Pezizomycotina</taxon>
        <taxon>Eurotiomycetes</taxon>
        <taxon>Eurotiomycetidae</taxon>
        <taxon>Eurotiales</taxon>
        <taxon>Trichocomaceae</taxon>
        <taxon>Talaromyces</taxon>
        <taxon>Talaromyces sect. Talaromyces</taxon>
    </lineage>
</organism>
<evidence type="ECO:0000250" key="1"/>
<evidence type="ECO:0000255" key="2">
    <source>
        <dbReference type="PROSITE-ProRule" id="PRU00227"/>
    </source>
</evidence>
<evidence type="ECO:0000256" key="3">
    <source>
        <dbReference type="SAM" id="MobiDB-lite"/>
    </source>
</evidence>
<evidence type="ECO:0000305" key="4"/>
<keyword id="KW-0010">Activator</keyword>
<keyword id="KW-0238">DNA-binding</keyword>
<keyword id="KW-0312">Gluconeogenesis</keyword>
<keyword id="KW-0479">Metal-binding</keyword>
<keyword id="KW-0539">Nucleus</keyword>
<keyword id="KW-1185">Reference proteome</keyword>
<keyword id="KW-0804">Transcription</keyword>
<keyword id="KW-0805">Transcription regulation</keyword>
<keyword id="KW-0862">Zinc</keyword>
<sequence length="674" mass="72703">MMDTDKDDLPSATDHSEHESGDAVKVEGGASKTASNSKDPSRPRRKKARRACFACQRAHLTCGDERPCQRCIKRGLQDACHDGVRKKAKYLHDAPDGALVPGAQGNFYNQANGLPKISPTEYTQNGTNNAQQQQQKSGTIYASSTPSYNNNNGTFDTNNATNTVLPDSAALNPGPFTATPASPTFSISTSSAMPSLTQPTNDMTSGAGQGSFGAFFDPSDPALFNFDLASMNFGNRYGALEFGMLGHMATGAGDTPPSDNGNQRGGSVGQRSNSQQFGNPPGAFTTESPSQQSFMFGDPVLNDWSGGQNTNPRMNVGSGLYGQGGGGGGGMHLLQQDAPHAYAIGSNTFASPSSTTSPHATTIAPSQFDDSPMKTKTVISTPHLRQQSLYNSNSNKRRHREPSAIYDSVKEPYSYTGGFHKLIAFIKRRFSPPKTVRIAKALASIRPSFIATTKTLNQDDLIFMEKCFQRTLWEYEDFINACGTPTIVCRRTGEVAAVGKEFSILTGWKKEVLLGKEPNLNVNTGGGNNTSSQSDSTSSSIRGGAGGRMRNQEPGPNNMAPVFLAELLDDDSVIEFYEDFARLAFGDSRGSVMNTCKLLKYKTKEDMDSVNADDSRWNSAMTHHIVGKGGIVGEAGMNRLGFKDGRVECSYCWTVKRDVFDIPMLIVMNFLPHI</sequence>
<reference key="1">
    <citation type="journal article" date="2015" name="Genome Announc.">
        <title>Genome sequence of the AIDS-associated pathogen Penicillium marneffei (ATCC18224) and its near taxonomic relative Talaromyces stipitatus (ATCC10500).</title>
        <authorList>
            <person name="Nierman W.C."/>
            <person name="Fedorova-Abrams N.D."/>
            <person name="Andrianopoulos A."/>
        </authorList>
    </citation>
    <scope>NUCLEOTIDE SEQUENCE [LARGE SCALE GENOMIC DNA]</scope>
    <source>
        <strain>ATCC 18224 / CBS 334.59 / QM 7333</strain>
    </source>
</reference>
<comment type="function">
    <text evidence="1">Transcription factor which regulates nonfermentable carbon utilization. Activator of gluconeogenetic genes (By similarity).</text>
</comment>
<comment type="subcellular location">
    <subcellularLocation>
        <location evidence="2">Nucleus</location>
    </subcellularLocation>
</comment>
<comment type="similarity">
    <text evidence="4">Belongs to the ERT1/acuK family.</text>
</comment>
<dbReference type="EMBL" id="DS995899">
    <property type="protein sequence ID" value="EEA28080.1"/>
    <property type="molecule type" value="Genomic_DNA"/>
</dbReference>
<dbReference type="RefSeq" id="XP_002144595.1">
    <property type="nucleotide sequence ID" value="XM_002144559.1"/>
</dbReference>
<dbReference type="VEuPathDB" id="FungiDB:PMAA_028970"/>
<dbReference type="HOGENOM" id="CLU_010748_1_0_1"/>
<dbReference type="OrthoDB" id="13456at28568"/>
<dbReference type="PhylomeDB" id="B6Q3B6"/>
<dbReference type="Proteomes" id="UP000001294">
    <property type="component" value="Unassembled WGS sequence"/>
</dbReference>
<dbReference type="GO" id="GO:0005634">
    <property type="term" value="C:nucleus"/>
    <property type="evidence" value="ECO:0007669"/>
    <property type="project" value="UniProtKB-SubCell"/>
</dbReference>
<dbReference type="GO" id="GO:0000981">
    <property type="term" value="F:DNA-binding transcription factor activity, RNA polymerase II-specific"/>
    <property type="evidence" value="ECO:0007669"/>
    <property type="project" value="InterPro"/>
</dbReference>
<dbReference type="GO" id="GO:0000977">
    <property type="term" value="F:RNA polymerase II transcription regulatory region sequence-specific DNA binding"/>
    <property type="evidence" value="ECO:0007669"/>
    <property type="project" value="TreeGrafter"/>
</dbReference>
<dbReference type="GO" id="GO:0008270">
    <property type="term" value="F:zinc ion binding"/>
    <property type="evidence" value="ECO:0007669"/>
    <property type="project" value="InterPro"/>
</dbReference>
<dbReference type="GO" id="GO:0009267">
    <property type="term" value="P:cellular response to starvation"/>
    <property type="evidence" value="ECO:0007669"/>
    <property type="project" value="TreeGrafter"/>
</dbReference>
<dbReference type="GO" id="GO:0006094">
    <property type="term" value="P:gluconeogenesis"/>
    <property type="evidence" value="ECO:0007669"/>
    <property type="project" value="UniProtKB-KW"/>
</dbReference>
<dbReference type="CDD" id="cd00067">
    <property type="entry name" value="GAL4"/>
    <property type="match status" value="1"/>
</dbReference>
<dbReference type="Gene3D" id="4.10.240.10">
    <property type="entry name" value="Zn(2)-C6 fungal-type DNA-binding domain"/>
    <property type="match status" value="1"/>
</dbReference>
<dbReference type="InterPro" id="IPR050335">
    <property type="entry name" value="ERT1_acuK_gluconeogen_tf"/>
</dbReference>
<dbReference type="InterPro" id="IPR056751">
    <property type="entry name" value="PAS_13"/>
</dbReference>
<dbReference type="InterPro" id="IPR036864">
    <property type="entry name" value="Zn2-C6_fun-type_DNA-bd_sf"/>
</dbReference>
<dbReference type="InterPro" id="IPR001138">
    <property type="entry name" value="Zn2Cys6_DnaBD"/>
</dbReference>
<dbReference type="PANTHER" id="PTHR47659:SF1">
    <property type="entry name" value="TRANSCRIPTION ACTIVATOR OF GLUCONEOGENESIS ERT1"/>
    <property type="match status" value="1"/>
</dbReference>
<dbReference type="PANTHER" id="PTHR47659">
    <property type="entry name" value="ZN(II)2CYS6 TRANSCRIPTION FACTOR (EUROFUNG)-RELATED"/>
    <property type="match status" value="1"/>
</dbReference>
<dbReference type="Pfam" id="PF24990">
    <property type="entry name" value="PAS_13"/>
    <property type="match status" value="1"/>
</dbReference>
<dbReference type="SMART" id="SM00066">
    <property type="entry name" value="GAL4"/>
    <property type="match status" value="1"/>
</dbReference>
<dbReference type="SUPFAM" id="SSF57701">
    <property type="entry name" value="Zn2/Cys6 DNA-binding domain"/>
    <property type="match status" value="1"/>
</dbReference>
<dbReference type="PROSITE" id="PS50048">
    <property type="entry name" value="ZN2_CY6_FUNGAL_2"/>
    <property type="match status" value="1"/>
</dbReference>
<protein>
    <recommendedName>
        <fullName>Transcription activator of gluconeogenesis PMAA_028970</fullName>
    </recommendedName>
</protein>
<name>ACUK_TALMQ</name>
<proteinExistence type="inferred from homology"/>
<accession>B6Q3B6</accession>
<feature type="chain" id="PRO_0000406447" description="Transcription activator of gluconeogenesis PMAA_028970">
    <location>
        <begin position="1"/>
        <end position="674"/>
    </location>
</feature>
<feature type="DNA-binding region" description="Zn(2)-C6 fungal-type" evidence="2">
    <location>
        <begin position="52"/>
        <end position="80"/>
    </location>
</feature>
<feature type="region of interest" description="Disordered" evidence="3">
    <location>
        <begin position="1"/>
        <end position="46"/>
    </location>
</feature>
<feature type="region of interest" description="Disordered" evidence="3">
    <location>
        <begin position="117"/>
        <end position="181"/>
    </location>
</feature>
<feature type="region of interest" description="Disordered" evidence="3">
    <location>
        <begin position="250"/>
        <end position="321"/>
    </location>
</feature>
<feature type="region of interest" description="Disordered" evidence="3">
    <location>
        <begin position="344"/>
        <end position="374"/>
    </location>
</feature>
<feature type="region of interest" description="Disordered" evidence="3">
    <location>
        <begin position="519"/>
        <end position="557"/>
    </location>
</feature>
<feature type="compositionally biased region" description="Basic and acidic residues" evidence="3">
    <location>
        <begin position="14"/>
        <end position="25"/>
    </location>
</feature>
<feature type="compositionally biased region" description="Polar residues" evidence="3">
    <location>
        <begin position="120"/>
        <end position="148"/>
    </location>
</feature>
<feature type="compositionally biased region" description="Low complexity" evidence="3">
    <location>
        <begin position="149"/>
        <end position="163"/>
    </location>
</feature>
<feature type="compositionally biased region" description="Polar residues" evidence="3">
    <location>
        <begin position="269"/>
        <end position="278"/>
    </location>
</feature>
<feature type="compositionally biased region" description="Polar residues" evidence="3">
    <location>
        <begin position="285"/>
        <end position="294"/>
    </location>
</feature>
<feature type="compositionally biased region" description="Low complexity" evidence="3">
    <location>
        <begin position="348"/>
        <end position="366"/>
    </location>
</feature>
<feature type="compositionally biased region" description="Low complexity" evidence="3">
    <location>
        <begin position="529"/>
        <end position="540"/>
    </location>
</feature>
<gene>
    <name type="ORF">PMAA_028970</name>
</gene>